<proteinExistence type="inferred from homology"/>
<name>NTPP_HAEDU</name>
<reference key="1">
    <citation type="submission" date="2003-06" db="EMBL/GenBank/DDBJ databases">
        <title>The complete genome sequence of Haemophilus ducreyi.</title>
        <authorList>
            <person name="Munson R.S. Jr."/>
            <person name="Ray W.C."/>
            <person name="Mahairas G."/>
            <person name="Sabo P."/>
            <person name="Mungur R."/>
            <person name="Johnson L."/>
            <person name="Nguyen D."/>
            <person name="Wang J."/>
            <person name="Forst C."/>
            <person name="Hood L."/>
        </authorList>
    </citation>
    <scope>NUCLEOTIDE SEQUENCE [LARGE SCALE GENOMIC DNA]</scope>
    <source>
        <strain>35000HP / ATCC 700724</strain>
    </source>
</reference>
<dbReference type="EC" id="3.6.1.9" evidence="1"/>
<dbReference type="EMBL" id="AE017143">
    <property type="protein sequence ID" value="AAP96555.1"/>
    <property type="molecule type" value="Genomic_DNA"/>
</dbReference>
<dbReference type="SMR" id="Q7VKR7"/>
<dbReference type="STRING" id="233412.HD_1805"/>
<dbReference type="KEGG" id="hdu:HD_1805"/>
<dbReference type="eggNOG" id="COG0424">
    <property type="taxonomic scope" value="Bacteria"/>
</dbReference>
<dbReference type="HOGENOM" id="CLU_040416_2_1_6"/>
<dbReference type="Proteomes" id="UP000001022">
    <property type="component" value="Chromosome"/>
</dbReference>
<dbReference type="GO" id="GO:0005737">
    <property type="term" value="C:cytoplasm"/>
    <property type="evidence" value="ECO:0007669"/>
    <property type="project" value="UniProtKB-SubCell"/>
</dbReference>
<dbReference type="GO" id="GO:0047429">
    <property type="term" value="F:nucleoside triphosphate diphosphatase activity"/>
    <property type="evidence" value="ECO:0007669"/>
    <property type="project" value="UniProtKB-EC"/>
</dbReference>
<dbReference type="GO" id="GO:0009117">
    <property type="term" value="P:nucleotide metabolic process"/>
    <property type="evidence" value="ECO:0007669"/>
    <property type="project" value="UniProtKB-KW"/>
</dbReference>
<dbReference type="CDD" id="cd00555">
    <property type="entry name" value="Maf"/>
    <property type="match status" value="1"/>
</dbReference>
<dbReference type="Gene3D" id="3.90.950.10">
    <property type="match status" value="1"/>
</dbReference>
<dbReference type="HAMAP" id="MF_00528">
    <property type="entry name" value="Maf"/>
    <property type="match status" value="1"/>
</dbReference>
<dbReference type="InterPro" id="IPR029001">
    <property type="entry name" value="ITPase-like_fam"/>
</dbReference>
<dbReference type="InterPro" id="IPR003697">
    <property type="entry name" value="Maf-like"/>
</dbReference>
<dbReference type="NCBIfam" id="TIGR00172">
    <property type="entry name" value="maf"/>
    <property type="match status" value="1"/>
</dbReference>
<dbReference type="PANTHER" id="PTHR43213">
    <property type="entry name" value="BIFUNCTIONAL DTTP/UTP PYROPHOSPHATASE/METHYLTRANSFERASE PROTEIN-RELATED"/>
    <property type="match status" value="1"/>
</dbReference>
<dbReference type="PANTHER" id="PTHR43213:SF5">
    <property type="entry name" value="BIFUNCTIONAL DTTP_UTP PYROPHOSPHATASE_METHYLTRANSFERASE PROTEIN-RELATED"/>
    <property type="match status" value="1"/>
</dbReference>
<dbReference type="Pfam" id="PF02545">
    <property type="entry name" value="Maf"/>
    <property type="match status" value="1"/>
</dbReference>
<dbReference type="PIRSF" id="PIRSF006305">
    <property type="entry name" value="Maf"/>
    <property type="match status" value="1"/>
</dbReference>
<dbReference type="SUPFAM" id="SSF52972">
    <property type="entry name" value="ITPase-like"/>
    <property type="match status" value="1"/>
</dbReference>
<evidence type="ECO:0000255" key="1">
    <source>
        <dbReference type="HAMAP-Rule" id="MF_00528"/>
    </source>
</evidence>
<organism>
    <name type="scientific">Haemophilus ducreyi (strain 35000HP / ATCC 700724)</name>
    <dbReference type="NCBI Taxonomy" id="233412"/>
    <lineage>
        <taxon>Bacteria</taxon>
        <taxon>Pseudomonadati</taxon>
        <taxon>Pseudomonadota</taxon>
        <taxon>Gammaproteobacteria</taxon>
        <taxon>Pasteurellales</taxon>
        <taxon>Pasteurellaceae</taxon>
        <taxon>Haemophilus</taxon>
    </lineage>
</organism>
<feature type="chain" id="PRO_0000123023" description="Nucleoside triphosphate pyrophosphatase">
    <location>
        <begin position="1"/>
        <end position="197"/>
    </location>
</feature>
<feature type="active site" description="Proton acceptor" evidence="1">
    <location>
        <position position="75"/>
    </location>
</feature>
<protein>
    <recommendedName>
        <fullName evidence="1">Nucleoside triphosphate pyrophosphatase</fullName>
        <ecNumber evidence="1">3.6.1.9</ecNumber>
    </recommendedName>
    <alternativeName>
        <fullName evidence="1">Nucleotide pyrophosphatase</fullName>
        <shortName evidence="1">Nucleotide PPase</shortName>
    </alternativeName>
</protein>
<sequence>MHKKLYLASNSPRRWALLQNLGLALLPLASEIDETAHANEMAQDYCSRIAREKNQAAQAVRIRQNLAEYPILTADIMVSIDGEILGKPSHQQQAVEMLKKLSGRTHQVYTAVCVSANQQLFECIHSSEVTFKRLSEAEIYAYIATGEPMDKAGAYGIQALGGIFIQHLAGSFTGVMGLPIFETVALLKKVNIEVLPS</sequence>
<gene>
    <name type="ordered locus">HD_1805</name>
</gene>
<keyword id="KW-0963">Cytoplasm</keyword>
<keyword id="KW-0378">Hydrolase</keyword>
<keyword id="KW-0546">Nucleotide metabolism</keyword>
<keyword id="KW-1185">Reference proteome</keyword>
<accession>Q7VKR7</accession>
<comment type="function">
    <text evidence="1">Nucleoside triphosphate pyrophosphatase. May have a dual role in cell division arrest and in preventing the incorporation of modified nucleotides into cellular nucleic acids.</text>
</comment>
<comment type="catalytic activity">
    <reaction evidence="1">
        <text>a ribonucleoside 5'-triphosphate + H2O = a ribonucleoside 5'-phosphate + diphosphate + H(+)</text>
        <dbReference type="Rhea" id="RHEA:23996"/>
        <dbReference type="ChEBI" id="CHEBI:15377"/>
        <dbReference type="ChEBI" id="CHEBI:15378"/>
        <dbReference type="ChEBI" id="CHEBI:33019"/>
        <dbReference type="ChEBI" id="CHEBI:58043"/>
        <dbReference type="ChEBI" id="CHEBI:61557"/>
        <dbReference type="EC" id="3.6.1.9"/>
    </reaction>
</comment>
<comment type="catalytic activity">
    <reaction evidence="1">
        <text>a 2'-deoxyribonucleoside 5'-triphosphate + H2O = a 2'-deoxyribonucleoside 5'-phosphate + diphosphate + H(+)</text>
        <dbReference type="Rhea" id="RHEA:44644"/>
        <dbReference type="ChEBI" id="CHEBI:15377"/>
        <dbReference type="ChEBI" id="CHEBI:15378"/>
        <dbReference type="ChEBI" id="CHEBI:33019"/>
        <dbReference type="ChEBI" id="CHEBI:61560"/>
        <dbReference type="ChEBI" id="CHEBI:65317"/>
        <dbReference type="EC" id="3.6.1.9"/>
    </reaction>
</comment>
<comment type="cofactor">
    <cofactor evidence="1">
        <name>a divalent metal cation</name>
        <dbReference type="ChEBI" id="CHEBI:60240"/>
    </cofactor>
</comment>
<comment type="subcellular location">
    <subcellularLocation>
        <location evidence="1">Cytoplasm</location>
    </subcellularLocation>
</comment>
<comment type="similarity">
    <text evidence="1">Belongs to the Maf family.</text>
</comment>